<protein>
    <recommendedName>
        <fullName evidence="1">Peptide chain release factor subunit 1</fullName>
    </recommendedName>
    <alternativeName>
        <fullName evidence="1">Translation termination factor aRF1</fullName>
    </alternativeName>
</protein>
<keyword id="KW-0963">Cytoplasm</keyword>
<keyword id="KW-0648">Protein biosynthesis</keyword>
<keyword id="KW-1185">Reference proteome</keyword>
<feature type="chain" id="PRO_1000060102" description="Peptide chain release factor subunit 1">
    <location>
        <begin position="1"/>
        <end position="416"/>
    </location>
</feature>
<reference key="1">
    <citation type="journal article" date="2006" name="BMC Genomics">
        <title>The genome of the square archaeon Haloquadratum walsbyi: life at the limits of water activity.</title>
        <authorList>
            <person name="Bolhuis H."/>
            <person name="Palm P."/>
            <person name="Wende A."/>
            <person name="Falb M."/>
            <person name="Rampp M."/>
            <person name="Rodriguez-Valera F."/>
            <person name="Pfeiffer F."/>
            <person name="Oesterhelt D."/>
        </authorList>
    </citation>
    <scope>NUCLEOTIDE SEQUENCE [LARGE SCALE GENOMIC DNA]</scope>
    <source>
        <strain>DSM 16790 / HBSQ001</strain>
    </source>
</reference>
<gene>
    <name evidence="1" type="primary">prf1</name>
    <name type="ordered locus">HQ_3241A</name>
</gene>
<accession>Q18FC0</accession>
<name>RF1_HALWD</name>
<organism>
    <name type="scientific">Haloquadratum walsbyi (strain DSM 16790 / HBSQ001)</name>
    <dbReference type="NCBI Taxonomy" id="362976"/>
    <lineage>
        <taxon>Archaea</taxon>
        <taxon>Methanobacteriati</taxon>
        <taxon>Methanobacteriota</taxon>
        <taxon>Stenosarchaea group</taxon>
        <taxon>Halobacteria</taxon>
        <taxon>Halobacteriales</taxon>
        <taxon>Haloferacaceae</taxon>
        <taxon>Haloquadratum</taxon>
    </lineage>
</organism>
<evidence type="ECO:0000255" key="1">
    <source>
        <dbReference type="HAMAP-Rule" id="MF_00424"/>
    </source>
</evidence>
<proteinExistence type="inferred from homology"/>
<comment type="function">
    <text evidence="1">Directs the termination of nascent peptide synthesis (translation) in response to the termination codons UAA, UAG and UGA.</text>
</comment>
<comment type="subunit">
    <text evidence="1">Heterodimer of two subunits, one of which binds GTP.</text>
</comment>
<comment type="subcellular location">
    <subcellularLocation>
        <location evidence="1">Cytoplasm</location>
    </subcellularLocation>
</comment>
<comment type="similarity">
    <text evidence="1">Belongs to the eukaryotic release factor 1 family.</text>
</comment>
<sequence>MSTDAEDVSNDRRKYEFRKVIEELREYEGSGTQLVTIYIPPDRQVSDVVAHITQEHSEASNIKSKQTRTNVQDALTSIKDRLRYYDTYPPDNGIVLFSGAVSTGGGQTTMVTRSLESPPEPVQSFRYHCDSDFLTDPLEDMLADKGLFGLIVLDRREANVGWLKGKRVEPVKSASSLVPGKQRKGGQSAQRFARLRLEAIDNFYQEVAGMANDLFVPKRHEIDGVLVGGPSPTKDEFLDGDYLHHELGDVVVGKFDVSYTDESGLHDLVDSAQDVLADQEVMKDKAEMEEFFEKLHGGEEATYGFEPTRKNLMMGAVDRLLLSEDLRSDVVVYECPDGHEEYEVIDRRHDDPEHTCSDCGSASEKTEREDVIEYLMSIAEQRGTETKFISTDFEKGEQLHNAFGGIAGILRYATGI</sequence>
<dbReference type="EMBL" id="AM180088">
    <property type="protein sequence ID" value="CAJ53338.1"/>
    <property type="molecule type" value="Genomic_DNA"/>
</dbReference>
<dbReference type="RefSeq" id="WP_011572443.1">
    <property type="nucleotide sequence ID" value="NC_008212.1"/>
</dbReference>
<dbReference type="SMR" id="Q18FC0"/>
<dbReference type="STRING" id="362976.HQ_3241A"/>
<dbReference type="GeneID" id="4193965"/>
<dbReference type="KEGG" id="hwa:HQ_3241A"/>
<dbReference type="eggNOG" id="arCOG01742">
    <property type="taxonomic scope" value="Archaea"/>
</dbReference>
<dbReference type="HOGENOM" id="CLU_035759_3_0_2"/>
<dbReference type="Proteomes" id="UP000001975">
    <property type="component" value="Chromosome"/>
</dbReference>
<dbReference type="GO" id="GO:0005737">
    <property type="term" value="C:cytoplasm"/>
    <property type="evidence" value="ECO:0007669"/>
    <property type="project" value="UniProtKB-SubCell"/>
</dbReference>
<dbReference type="GO" id="GO:0016149">
    <property type="term" value="F:translation release factor activity, codon specific"/>
    <property type="evidence" value="ECO:0007669"/>
    <property type="project" value="UniProtKB-UniRule"/>
</dbReference>
<dbReference type="FunFam" id="3.30.420.60:FF:000003">
    <property type="entry name" value="Peptide chain release factor subunit 1"/>
    <property type="match status" value="1"/>
</dbReference>
<dbReference type="FunFam" id="3.30.960.10:FF:000003">
    <property type="entry name" value="Peptide chain release factor subunit 1"/>
    <property type="match status" value="1"/>
</dbReference>
<dbReference type="Gene3D" id="1.20.5.170">
    <property type="match status" value="1"/>
</dbReference>
<dbReference type="Gene3D" id="3.30.1330.30">
    <property type="match status" value="1"/>
</dbReference>
<dbReference type="Gene3D" id="3.30.960.10">
    <property type="entry name" value="eRF1 domain 1"/>
    <property type="match status" value="1"/>
</dbReference>
<dbReference type="Gene3D" id="3.30.420.60">
    <property type="entry name" value="eRF1 domain 2"/>
    <property type="match status" value="1"/>
</dbReference>
<dbReference type="HAMAP" id="MF_00424">
    <property type="entry name" value="Rel_fact_arch_1"/>
    <property type="match status" value="1"/>
</dbReference>
<dbReference type="InterPro" id="IPR042226">
    <property type="entry name" value="eFR1_2_sf"/>
</dbReference>
<dbReference type="InterPro" id="IPR005140">
    <property type="entry name" value="eRF1_1_Pelota"/>
</dbReference>
<dbReference type="InterPro" id="IPR024049">
    <property type="entry name" value="eRF1_1_sf"/>
</dbReference>
<dbReference type="InterPro" id="IPR005141">
    <property type="entry name" value="eRF1_2"/>
</dbReference>
<dbReference type="InterPro" id="IPR005142">
    <property type="entry name" value="eRF1_3"/>
</dbReference>
<dbReference type="InterPro" id="IPR020918">
    <property type="entry name" value="Peptide_chain-rel_aRF1"/>
</dbReference>
<dbReference type="InterPro" id="IPR004403">
    <property type="entry name" value="Peptide_chain-rel_eRF1/aRF1"/>
</dbReference>
<dbReference type="InterPro" id="IPR029064">
    <property type="entry name" value="Ribosomal_eL30-like_sf"/>
</dbReference>
<dbReference type="NCBIfam" id="TIGR03676">
    <property type="entry name" value="aRF1_eRF1"/>
    <property type="match status" value="1"/>
</dbReference>
<dbReference type="PANTHER" id="PTHR10113">
    <property type="entry name" value="PEPTIDE CHAIN RELEASE FACTOR SUBUNIT 1"/>
    <property type="match status" value="1"/>
</dbReference>
<dbReference type="Pfam" id="PF03463">
    <property type="entry name" value="eRF1_1"/>
    <property type="match status" value="1"/>
</dbReference>
<dbReference type="Pfam" id="PF03464">
    <property type="entry name" value="eRF1_2"/>
    <property type="match status" value="1"/>
</dbReference>
<dbReference type="Pfam" id="PF03465">
    <property type="entry name" value="eRF1_3"/>
    <property type="match status" value="1"/>
</dbReference>
<dbReference type="SMART" id="SM01194">
    <property type="entry name" value="eRF1_1"/>
    <property type="match status" value="1"/>
</dbReference>
<dbReference type="SUPFAM" id="SSF55315">
    <property type="entry name" value="L30e-like"/>
    <property type="match status" value="1"/>
</dbReference>
<dbReference type="SUPFAM" id="SSF55481">
    <property type="entry name" value="N-terminal domain of eukaryotic peptide chain release factor subunit 1, ERF1"/>
    <property type="match status" value="1"/>
</dbReference>
<dbReference type="SUPFAM" id="SSF53137">
    <property type="entry name" value="Translational machinery components"/>
    <property type="match status" value="1"/>
</dbReference>